<organism>
    <name type="scientific">Campylobacter hominis (strain ATCC BAA-381 / DSM 21671 / CCUG 45161 / LMG 19568 / NCTC 13146 / CH001A)</name>
    <dbReference type="NCBI Taxonomy" id="360107"/>
    <lineage>
        <taxon>Bacteria</taxon>
        <taxon>Pseudomonadati</taxon>
        <taxon>Campylobacterota</taxon>
        <taxon>Epsilonproteobacteria</taxon>
        <taxon>Campylobacterales</taxon>
        <taxon>Campylobacteraceae</taxon>
        <taxon>Campylobacter</taxon>
    </lineage>
</organism>
<evidence type="ECO:0000255" key="1">
    <source>
        <dbReference type="HAMAP-Rule" id="MF_01576"/>
    </source>
</evidence>
<feature type="chain" id="PRO_0000340577" description="Bifunctional protein FolD">
    <location>
        <begin position="1"/>
        <end position="284"/>
    </location>
</feature>
<feature type="binding site" evidence="1">
    <location>
        <begin position="163"/>
        <end position="165"/>
    </location>
    <ligand>
        <name>NADP(+)</name>
        <dbReference type="ChEBI" id="CHEBI:58349"/>
    </ligand>
</feature>
<feature type="binding site" evidence="1">
    <location>
        <position position="188"/>
    </location>
    <ligand>
        <name>NADP(+)</name>
        <dbReference type="ChEBI" id="CHEBI:58349"/>
    </ligand>
</feature>
<feature type="binding site" evidence="1">
    <location>
        <position position="229"/>
    </location>
    <ligand>
        <name>NADP(+)</name>
        <dbReference type="ChEBI" id="CHEBI:58349"/>
    </ligand>
</feature>
<proteinExistence type="inferred from homology"/>
<comment type="function">
    <text evidence="1">Catalyzes the oxidation of 5,10-methylenetetrahydrofolate to 5,10-methenyltetrahydrofolate and then the hydrolysis of 5,10-methenyltetrahydrofolate to 10-formyltetrahydrofolate.</text>
</comment>
<comment type="catalytic activity">
    <reaction evidence="1">
        <text>(6R)-5,10-methylene-5,6,7,8-tetrahydrofolate + NADP(+) = (6R)-5,10-methenyltetrahydrofolate + NADPH</text>
        <dbReference type="Rhea" id="RHEA:22812"/>
        <dbReference type="ChEBI" id="CHEBI:15636"/>
        <dbReference type="ChEBI" id="CHEBI:57455"/>
        <dbReference type="ChEBI" id="CHEBI:57783"/>
        <dbReference type="ChEBI" id="CHEBI:58349"/>
        <dbReference type="EC" id="1.5.1.5"/>
    </reaction>
</comment>
<comment type="catalytic activity">
    <reaction evidence="1">
        <text>(6R)-5,10-methenyltetrahydrofolate + H2O = (6R)-10-formyltetrahydrofolate + H(+)</text>
        <dbReference type="Rhea" id="RHEA:23700"/>
        <dbReference type="ChEBI" id="CHEBI:15377"/>
        <dbReference type="ChEBI" id="CHEBI:15378"/>
        <dbReference type="ChEBI" id="CHEBI:57455"/>
        <dbReference type="ChEBI" id="CHEBI:195366"/>
        <dbReference type="EC" id="3.5.4.9"/>
    </reaction>
</comment>
<comment type="pathway">
    <text evidence="1">One-carbon metabolism; tetrahydrofolate interconversion.</text>
</comment>
<comment type="subunit">
    <text evidence="1">Homodimer.</text>
</comment>
<comment type="similarity">
    <text evidence="1">Belongs to the tetrahydrofolate dehydrogenase/cyclohydrolase family.</text>
</comment>
<gene>
    <name evidence="1" type="primary">folD</name>
    <name type="ordered locus">CHAB381_1036</name>
</gene>
<name>FOLD_CAMHC</name>
<protein>
    <recommendedName>
        <fullName evidence="1">Bifunctional protein FolD</fullName>
    </recommendedName>
    <domain>
        <recommendedName>
            <fullName evidence="1">Methylenetetrahydrofolate dehydrogenase</fullName>
            <ecNumber evidence="1">1.5.1.5</ecNumber>
        </recommendedName>
    </domain>
    <domain>
        <recommendedName>
            <fullName evidence="1">Methenyltetrahydrofolate cyclohydrolase</fullName>
            <ecNumber evidence="1">3.5.4.9</ecNumber>
        </recommendedName>
    </domain>
</protein>
<sequence length="284" mass="30549">MQLIDGKAISAKVKEEVKNEAAQLTEKGVVPCLAVILVGDDKASQTYVNSKEKACKACGIRSLKYTLEANTSESALIDLIQSLNENDEVDGILVQLPLPKHIDENKILEKISCEKDVDGFHAVNVGRLVSGLDGFVPCTPCGIMRLFKEYDIEISGKNAVVIGRSNIVGKPMANLLLNANATVTVTHSKTQNLAKITKDADIIVVAIGKPNFLKADMVKNGAVVIDVGINRLENNKLVGDADFENVANKCSFITPVPGGVGPMTIAMLLKNTIKSAKNRLKRLK</sequence>
<reference key="1">
    <citation type="submission" date="2007-07" db="EMBL/GenBank/DDBJ databases">
        <title>Complete genome sequence of Campylobacter hominis ATCC BAA-381, a commensal isolated from the human gastrointestinal tract.</title>
        <authorList>
            <person name="Fouts D.E."/>
            <person name="Mongodin E.F."/>
            <person name="Puiu D."/>
            <person name="Sebastian Y."/>
            <person name="Miller W.G."/>
            <person name="Mandrell R.E."/>
            <person name="Nelson K.E."/>
        </authorList>
    </citation>
    <scope>NUCLEOTIDE SEQUENCE [LARGE SCALE GENOMIC DNA]</scope>
    <source>
        <strain>ATCC BAA-381 / DSM 21671 / CCUG 45161 / LMG 19568 / NCTC 13146 / CH001A</strain>
    </source>
</reference>
<keyword id="KW-0028">Amino-acid biosynthesis</keyword>
<keyword id="KW-0368">Histidine biosynthesis</keyword>
<keyword id="KW-0378">Hydrolase</keyword>
<keyword id="KW-0486">Methionine biosynthesis</keyword>
<keyword id="KW-0511">Multifunctional enzyme</keyword>
<keyword id="KW-0521">NADP</keyword>
<keyword id="KW-0554">One-carbon metabolism</keyword>
<keyword id="KW-0560">Oxidoreductase</keyword>
<keyword id="KW-0658">Purine biosynthesis</keyword>
<keyword id="KW-1185">Reference proteome</keyword>
<dbReference type="EC" id="1.5.1.5" evidence="1"/>
<dbReference type="EC" id="3.5.4.9" evidence="1"/>
<dbReference type="EMBL" id="CP000776">
    <property type="protein sequence ID" value="ABS52171.1"/>
    <property type="molecule type" value="Genomic_DNA"/>
</dbReference>
<dbReference type="RefSeq" id="WP_012108892.1">
    <property type="nucleotide sequence ID" value="NC_009714.1"/>
</dbReference>
<dbReference type="SMR" id="A7I254"/>
<dbReference type="STRING" id="360107.CHAB381_1036"/>
<dbReference type="KEGG" id="cha:CHAB381_1036"/>
<dbReference type="eggNOG" id="COG0190">
    <property type="taxonomic scope" value="Bacteria"/>
</dbReference>
<dbReference type="HOGENOM" id="CLU_034045_2_1_7"/>
<dbReference type="OrthoDB" id="9803580at2"/>
<dbReference type="UniPathway" id="UPA00193"/>
<dbReference type="Proteomes" id="UP000002407">
    <property type="component" value="Chromosome"/>
</dbReference>
<dbReference type="GO" id="GO:0005829">
    <property type="term" value="C:cytosol"/>
    <property type="evidence" value="ECO:0007669"/>
    <property type="project" value="TreeGrafter"/>
</dbReference>
<dbReference type="GO" id="GO:0004477">
    <property type="term" value="F:methenyltetrahydrofolate cyclohydrolase activity"/>
    <property type="evidence" value="ECO:0007669"/>
    <property type="project" value="UniProtKB-UniRule"/>
</dbReference>
<dbReference type="GO" id="GO:0004488">
    <property type="term" value="F:methylenetetrahydrofolate dehydrogenase (NADP+) activity"/>
    <property type="evidence" value="ECO:0007669"/>
    <property type="project" value="UniProtKB-UniRule"/>
</dbReference>
<dbReference type="GO" id="GO:0000105">
    <property type="term" value="P:L-histidine biosynthetic process"/>
    <property type="evidence" value="ECO:0007669"/>
    <property type="project" value="UniProtKB-KW"/>
</dbReference>
<dbReference type="GO" id="GO:0009086">
    <property type="term" value="P:methionine biosynthetic process"/>
    <property type="evidence" value="ECO:0007669"/>
    <property type="project" value="UniProtKB-KW"/>
</dbReference>
<dbReference type="GO" id="GO:0006164">
    <property type="term" value="P:purine nucleotide biosynthetic process"/>
    <property type="evidence" value="ECO:0007669"/>
    <property type="project" value="UniProtKB-KW"/>
</dbReference>
<dbReference type="GO" id="GO:0035999">
    <property type="term" value="P:tetrahydrofolate interconversion"/>
    <property type="evidence" value="ECO:0007669"/>
    <property type="project" value="UniProtKB-UniRule"/>
</dbReference>
<dbReference type="CDD" id="cd01080">
    <property type="entry name" value="NAD_bind_m-THF_DH_Cyclohyd"/>
    <property type="match status" value="1"/>
</dbReference>
<dbReference type="FunFam" id="3.40.50.10860:FF:000001">
    <property type="entry name" value="Bifunctional protein FolD"/>
    <property type="match status" value="1"/>
</dbReference>
<dbReference type="FunFam" id="3.40.50.720:FF:000094">
    <property type="entry name" value="Bifunctional protein FolD"/>
    <property type="match status" value="1"/>
</dbReference>
<dbReference type="Gene3D" id="3.40.50.10860">
    <property type="entry name" value="Leucine Dehydrogenase, chain A, domain 1"/>
    <property type="match status" value="1"/>
</dbReference>
<dbReference type="Gene3D" id="3.40.50.720">
    <property type="entry name" value="NAD(P)-binding Rossmann-like Domain"/>
    <property type="match status" value="1"/>
</dbReference>
<dbReference type="HAMAP" id="MF_01576">
    <property type="entry name" value="THF_DHG_CYH"/>
    <property type="match status" value="1"/>
</dbReference>
<dbReference type="InterPro" id="IPR046346">
    <property type="entry name" value="Aminoacid_DH-like_N_sf"/>
</dbReference>
<dbReference type="InterPro" id="IPR036291">
    <property type="entry name" value="NAD(P)-bd_dom_sf"/>
</dbReference>
<dbReference type="InterPro" id="IPR000672">
    <property type="entry name" value="THF_DH/CycHdrlase"/>
</dbReference>
<dbReference type="InterPro" id="IPR020630">
    <property type="entry name" value="THF_DH/CycHdrlase_cat_dom"/>
</dbReference>
<dbReference type="InterPro" id="IPR020867">
    <property type="entry name" value="THF_DH/CycHdrlase_CS"/>
</dbReference>
<dbReference type="InterPro" id="IPR020631">
    <property type="entry name" value="THF_DH/CycHdrlase_NAD-bd_dom"/>
</dbReference>
<dbReference type="NCBIfam" id="NF008058">
    <property type="entry name" value="PRK10792.1"/>
    <property type="match status" value="1"/>
</dbReference>
<dbReference type="NCBIfam" id="NF010783">
    <property type="entry name" value="PRK14186.1"/>
    <property type="match status" value="1"/>
</dbReference>
<dbReference type="NCBIfam" id="NF010787">
    <property type="entry name" value="PRK14191.1"/>
    <property type="match status" value="1"/>
</dbReference>
<dbReference type="PANTHER" id="PTHR48099:SF5">
    <property type="entry name" value="C-1-TETRAHYDROFOLATE SYNTHASE, CYTOPLASMIC"/>
    <property type="match status" value="1"/>
</dbReference>
<dbReference type="PANTHER" id="PTHR48099">
    <property type="entry name" value="C-1-TETRAHYDROFOLATE SYNTHASE, CYTOPLASMIC-RELATED"/>
    <property type="match status" value="1"/>
</dbReference>
<dbReference type="Pfam" id="PF00763">
    <property type="entry name" value="THF_DHG_CYH"/>
    <property type="match status" value="1"/>
</dbReference>
<dbReference type="Pfam" id="PF02882">
    <property type="entry name" value="THF_DHG_CYH_C"/>
    <property type="match status" value="1"/>
</dbReference>
<dbReference type="PRINTS" id="PR00085">
    <property type="entry name" value="THFDHDRGNASE"/>
</dbReference>
<dbReference type="SUPFAM" id="SSF53223">
    <property type="entry name" value="Aminoacid dehydrogenase-like, N-terminal domain"/>
    <property type="match status" value="1"/>
</dbReference>
<dbReference type="SUPFAM" id="SSF51735">
    <property type="entry name" value="NAD(P)-binding Rossmann-fold domains"/>
    <property type="match status" value="1"/>
</dbReference>
<dbReference type="PROSITE" id="PS00767">
    <property type="entry name" value="THF_DHG_CYH_2"/>
    <property type="match status" value="1"/>
</dbReference>
<accession>A7I254</accession>